<comment type="function">
    <text evidence="1">The glycine cleavage system catalyzes the degradation of glycine.</text>
</comment>
<comment type="catalytic activity">
    <reaction evidence="1">
        <text>N(6)-[(R)-S(8)-aminomethyldihydrolipoyl]-L-lysyl-[protein] + (6S)-5,6,7,8-tetrahydrofolate = N(6)-[(R)-dihydrolipoyl]-L-lysyl-[protein] + (6R)-5,10-methylene-5,6,7,8-tetrahydrofolate + NH4(+)</text>
        <dbReference type="Rhea" id="RHEA:16945"/>
        <dbReference type="Rhea" id="RHEA-COMP:10475"/>
        <dbReference type="Rhea" id="RHEA-COMP:10492"/>
        <dbReference type="ChEBI" id="CHEBI:15636"/>
        <dbReference type="ChEBI" id="CHEBI:28938"/>
        <dbReference type="ChEBI" id="CHEBI:57453"/>
        <dbReference type="ChEBI" id="CHEBI:83100"/>
        <dbReference type="ChEBI" id="CHEBI:83143"/>
        <dbReference type="EC" id="2.1.2.10"/>
    </reaction>
</comment>
<comment type="subunit">
    <text evidence="1">The glycine cleavage system is composed of four proteins: P, T, L and H.</text>
</comment>
<comment type="similarity">
    <text evidence="1">Belongs to the GcvT family.</text>
</comment>
<sequence length="363" mass="39455">MLKQTPLFDLHRDMGGKLVDFGGWNMPVNYGSQIEEHHAVRNGAGMFDVSHMTVVDIQGTGARDFLRYLLANDVDRLKLPGKALYTGMLNESGGVIDDLIVYLMVNGYRLVVNCATREKDLAWINSQAEAYDVTVIERPELAMIAVQGPLARGKVHDLIGAAVLEELKIFQGVPLSGEGYADWFVARTGYTGEDGYEIILPAEAAVQLWQDLARIGVTPCGLGARDTLRLEAGMNLYGHEMDDDTSPLVANMAWTVAWEPAERNFIGREALTAEKSAGISHKLVGLVYTGKGVLRAEQEVTAPGVDGVGVITSGTFSPTLGYSIALARVPVGFTDQAVVNVRNRQLEVKIISPCFVRSGNKVF</sequence>
<protein>
    <recommendedName>
        <fullName evidence="1">Aminomethyltransferase</fullName>
        <ecNumber evidence="1">2.1.2.10</ecNumber>
    </recommendedName>
    <alternativeName>
        <fullName evidence="1">Glycine cleavage system T protein</fullName>
    </alternativeName>
</protein>
<dbReference type="EC" id="2.1.2.10" evidence="1"/>
<dbReference type="EMBL" id="CP001614">
    <property type="protein sequence ID" value="ACR12644.1"/>
    <property type="molecule type" value="Genomic_DNA"/>
</dbReference>
<dbReference type="RefSeq" id="WP_015818756.1">
    <property type="nucleotide sequence ID" value="NC_012997.1"/>
</dbReference>
<dbReference type="SMR" id="C5BM95"/>
<dbReference type="STRING" id="377629.TERTU_0356"/>
<dbReference type="KEGG" id="ttu:TERTU_0356"/>
<dbReference type="eggNOG" id="COG0404">
    <property type="taxonomic scope" value="Bacteria"/>
</dbReference>
<dbReference type="HOGENOM" id="CLU_007884_10_2_6"/>
<dbReference type="OrthoDB" id="9774591at2"/>
<dbReference type="Proteomes" id="UP000009080">
    <property type="component" value="Chromosome"/>
</dbReference>
<dbReference type="GO" id="GO:0005829">
    <property type="term" value="C:cytosol"/>
    <property type="evidence" value="ECO:0007669"/>
    <property type="project" value="TreeGrafter"/>
</dbReference>
<dbReference type="GO" id="GO:0005960">
    <property type="term" value="C:glycine cleavage complex"/>
    <property type="evidence" value="ECO:0007669"/>
    <property type="project" value="InterPro"/>
</dbReference>
<dbReference type="GO" id="GO:0004047">
    <property type="term" value="F:aminomethyltransferase activity"/>
    <property type="evidence" value="ECO:0007669"/>
    <property type="project" value="UniProtKB-UniRule"/>
</dbReference>
<dbReference type="GO" id="GO:0008483">
    <property type="term" value="F:transaminase activity"/>
    <property type="evidence" value="ECO:0007669"/>
    <property type="project" value="UniProtKB-KW"/>
</dbReference>
<dbReference type="GO" id="GO:0019464">
    <property type="term" value="P:glycine decarboxylation via glycine cleavage system"/>
    <property type="evidence" value="ECO:0007669"/>
    <property type="project" value="UniProtKB-UniRule"/>
</dbReference>
<dbReference type="FunFam" id="3.30.70.1400:FF:000001">
    <property type="entry name" value="Aminomethyltransferase"/>
    <property type="match status" value="1"/>
</dbReference>
<dbReference type="FunFam" id="4.10.1250.10:FF:000001">
    <property type="entry name" value="Aminomethyltransferase"/>
    <property type="match status" value="1"/>
</dbReference>
<dbReference type="Gene3D" id="2.40.30.110">
    <property type="entry name" value="Aminomethyltransferase beta-barrel domains"/>
    <property type="match status" value="1"/>
</dbReference>
<dbReference type="Gene3D" id="3.30.70.1400">
    <property type="entry name" value="Aminomethyltransferase beta-barrel domains"/>
    <property type="match status" value="1"/>
</dbReference>
<dbReference type="Gene3D" id="4.10.1250.10">
    <property type="entry name" value="Aminomethyltransferase fragment"/>
    <property type="match status" value="1"/>
</dbReference>
<dbReference type="Gene3D" id="3.30.1360.120">
    <property type="entry name" value="Probable tRNA modification gtpase trme, domain 1"/>
    <property type="match status" value="1"/>
</dbReference>
<dbReference type="HAMAP" id="MF_00259">
    <property type="entry name" value="GcvT"/>
    <property type="match status" value="1"/>
</dbReference>
<dbReference type="InterPro" id="IPR006223">
    <property type="entry name" value="GCS_T"/>
</dbReference>
<dbReference type="InterPro" id="IPR022903">
    <property type="entry name" value="GCS_T_bac"/>
</dbReference>
<dbReference type="InterPro" id="IPR013977">
    <property type="entry name" value="GCST_C"/>
</dbReference>
<dbReference type="InterPro" id="IPR006222">
    <property type="entry name" value="GCV_T_N"/>
</dbReference>
<dbReference type="InterPro" id="IPR028896">
    <property type="entry name" value="GcvT/YgfZ/DmdA"/>
</dbReference>
<dbReference type="InterPro" id="IPR029043">
    <property type="entry name" value="GcvT/YgfZ_C"/>
</dbReference>
<dbReference type="InterPro" id="IPR027266">
    <property type="entry name" value="TrmE/GcvT_dom1"/>
</dbReference>
<dbReference type="NCBIfam" id="TIGR00528">
    <property type="entry name" value="gcvT"/>
    <property type="match status" value="1"/>
</dbReference>
<dbReference type="NCBIfam" id="NF001567">
    <property type="entry name" value="PRK00389.1"/>
    <property type="match status" value="1"/>
</dbReference>
<dbReference type="PANTHER" id="PTHR43757">
    <property type="entry name" value="AMINOMETHYLTRANSFERASE"/>
    <property type="match status" value="1"/>
</dbReference>
<dbReference type="PANTHER" id="PTHR43757:SF2">
    <property type="entry name" value="AMINOMETHYLTRANSFERASE, MITOCHONDRIAL"/>
    <property type="match status" value="1"/>
</dbReference>
<dbReference type="Pfam" id="PF01571">
    <property type="entry name" value="GCV_T"/>
    <property type="match status" value="1"/>
</dbReference>
<dbReference type="Pfam" id="PF08669">
    <property type="entry name" value="GCV_T_C"/>
    <property type="match status" value="1"/>
</dbReference>
<dbReference type="PIRSF" id="PIRSF006487">
    <property type="entry name" value="GcvT"/>
    <property type="match status" value="1"/>
</dbReference>
<dbReference type="SUPFAM" id="SSF101790">
    <property type="entry name" value="Aminomethyltransferase beta-barrel domain"/>
    <property type="match status" value="1"/>
</dbReference>
<dbReference type="SUPFAM" id="SSF103025">
    <property type="entry name" value="Folate-binding domain"/>
    <property type="match status" value="1"/>
</dbReference>
<reference key="1">
    <citation type="journal article" date="2009" name="PLoS ONE">
        <title>The complete genome of Teredinibacter turnerae T7901: an intracellular endosymbiont of marine wood-boring bivalves (shipworms).</title>
        <authorList>
            <person name="Yang J.C."/>
            <person name="Madupu R."/>
            <person name="Durkin A.S."/>
            <person name="Ekborg N.A."/>
            <person name="Pedamallu C.S."/>
            <person name="Hostetler J.B."/>
            <person name="Radune D."/>
            <person name="Toms B.S."/>
            <person name="Henrissat B."/>
            <person name="Coutinho P.M."/>
            <person name="Schwarz S."/>
            <person name="Field L."/>
            <person name="Trindade-Silva A.E."/>
            <person name="Soares C.A.G."/>
            <person name="Elshahawi S."/>
            <person name="Hanora A."/>
            <person name="Schmidt E.W."/>
            <person name="Haygood M.G."/>
            <person name="Posfai J."/>
            <person name="Benner J."/>
            <person name="Madinger C."/>
            <person name="Nove J."/>
            <person name="Anton B."/>
            <person name="Chaudhary K."/>
            <person name="Foster J."/>
            <person name="Holman A."/>
            <person name="Kumar S."/>
            <person name="Lessard P.A."/>
            <person name="Luyten Y.A."/>
            <person name="Slatko B."/>
            <person name="Wood N."/>
            <person name="Wu B."/>
            <person name="Teplitski M."/>
            <person name="Mougous J.D."/>
            <person name="Ward N."/>
            <person name="Eisen J.A."/>
            <person name="Badger J.H."/>
            <person name="Distel D.L."/>
        </authorList>
    </citation>
    <scope>NUCLEOTIDE SEQUENCE [LARGE SCALE GENOMIC DNA]</scope>
    <source>
        <strain>ATCC 39867 / T7901</strain>
    </source>
</reference>
<name>GCST_TERTT</name>
<accession>C5BM95</accession>
<proteinExistence type="inferred from homology"/>
<feature type="chain" id="PRO_1000204642" description="Aminomethyltransferase">
    <location>
        <begin position="1"/>
        <end position="363"/>
    </location>
</feature>
<gene>
    <name evidence="1" type="primary">gcvT</name>
    <name type="ordered locus">TERTU_0356</name>
</gene>
<organism>
    <name type="scientific">Teredinibacter turnerae (strain ATCC 39867 / T7901)</name>
    <dbReference type="NCBI Taxonomy" id="377629"/>
    <lineage>
        <taxon>Bacteria</taxon>
        <taxon>Pseudomonadati</taxon>
        <taxon>Pseudomonadota</taxon>
        <taxon>Gammaproteobacteria</taxon>
        <taxon>Cellvibrionales</taxon>
        <taxon>Cellvibrionaceae</taxon>
        <taxon>Teredinibacter</taxon>
    </lineage>
</organism>
<evidence type="ECO:0000255" key="1">
    <source>
        <dbReference type="HAMAP-Rule" id="MF_00259"/>
    </source>
</evidence>
<keyword id="KW-0032">Aminotransferase</keyword>
<keyword id="KW-1185">Reference proteome</keyword>
<keyword id="KW-0808">Transferase</keyword>